<name>TUSD_SALNS</name>
<feature type="chain" id="PRO_1000122872" description="Sulfurtransferase TusD">
    <location>
        <begin position="1"/>
        <end position="128"/>
    </location>
</feature>
<feature type="active site" description="Cysteine persulfide intermediate" evidence="1">
    <location>
        <position position="78"/>
    </location>
</feature>
<dbReference type="EC" id="2.8.1.-" evidence="1"/>
<dbReference type="EMBL" id="CP001113">
    <property type="protein sequence ID" value="ACF64100.1"/>
    <property type="molecule type" value="Genomic_DNA"/>
</dbReference>
<dbReference type="RefSeq" id="WP_001268006.1">
    <property type="nucleotide sequence ID" value="NZ_CCMR01000004.1"/>
</dbReference>
<dbReference type="SMR" id="B4SUV1"/>
<dbReference type="KEGG" id="see:SNSL254_A3721"/>
<dbReference type="HOGENOM" id="CLU_132095_0_0_6"/>
<dbReference type="Proteomes" id="UP000008824">
    <property type="component" value="Chromosome"/>
</dbReference>
<dbReference type="GO" id="GO:1990228">
    <property type="term" value="C:sulfurtransferase complex"/>
    <property type="evidence" value="ECO:0007669"/>
    <property type="project" value="TreeGrafter"/>
</dbReference>
<dbReference type="GO" id="GO:0097163">
    <property type="term" value="F:sulfur carrier activity"/>
    <property type="evidence" value="ECO:0007669"/>
    <property type="project" value="TreeGrafter"/>
</dbReference>
<dbReference type="GO" id="GO:0016783">
    <property type="term" value="F:sulfurtransferase activity"/>
    <property type="evidence" value="ECO:0007669"/>
    <property type="project" value="UniProtKB-UniRule"/>
</dbReference>
<dbReference type="GO" id="GO:0002143">
    <property type="term" value="P:tRNA wobble position uridine thiolation"/>
    <property type="evidence" value="ECO:0007669"/>
    <property type="project" value="TreeGrafter"/>
</dbReference>
<dbReference type="FunFam" id="3.40.1260.10:FF:000001">
    <property type="entry name" value="Sulfurtransferase TusD"/>
    <property type="match status" value="1"/>
</dbReference>
<dbReference type="Gene3D" id="3.40.1260.10">
    <property type="entry name" value="DsrEFH-like"/>
    <property type="match status" value="1"/>
</dbReference>
<dbReference type="HAMAP" id="MF_00390">
    <property type="entry name" value="Thiourid_synth_D"/>
    <property type="match status" value="1"/>
</dbReference>
<dbReference type="InterPro" id="IPR027396">
    <property type="entry name" value="DsrEFH-like"/>
</dbReference>
<dbReference type="InterPro" id="IPR003787">
    <property type="entry name" value="Sulphur_relay_DsrE/F-like"/>
</dbReference>
<dbReference type="InterPro" id="IPR017463">
    <property type="entry name" value="Sulphur_relay_TusD/DsrE"/>
</dbReference>
<dbReference type="NCBIfam" id="NF001237">
    <property type="entry name" value="PRK00207.1"/>
    <property type="match status" value="1"/>
</dbReference>
<dbReference type="NCBIfam" id="TIGR03012">
    <property type="entry name" value="sulf_tusD_dsrE"/>
    <property type="match status" value="1"/>
</dbReference>
<dbReference type="PANTHER" id="PTHR34874">
    <property type="entry name" value="PROTEIN YCHN"/>
    <property type="match status" value="1"/>
</dbReference>
<dbReference type="PANTHER" id="PTHR34874:SF3">
    <property type="entry name" value="SULFURTRANSFERASE TUSD"/>
    <property type="match status" value="1"/>
</dbReference>
<dbReference type="Pfam" id="PF02635">
    <property type="entry name" value="DsrE"/>
    <property type="match status" value="1"/>
</dbReference>
<dbReference type="SUPFAM" id="SSF75169">
    <property type="entry name" value="DsrEFH-like"/>
    <property type="match status" value="1"/>
</dbReference>
<gene>
    <name evidence="1" type="primary">tusD</name>
    <name type="ordered locus">SNSL254_A3721</name>
</gene>
<comment type="function">
    <text evidence="1">Part of a sulfur-relay system required for 2-thiolation of 5-methylaminomethyl-2-thiouridine (mnm(5)s(2)U) at tRNA wobble positions. Accepts sulfur from TusA and transfers it in turn to TusE.</text>
</comment>
<comment type="subunit">
    <text evidence="1">Heterohexamer, formed by a dimer of trimers. The hexameric TusBCD complex contains 2 copies each of TusB, TusC and TusD. The TusBCD complex interacts with TusE.</text>
</comment>
<comment type="subcellular location">
    <subcellularLocation>
        <location evidence="1">Cytoplasm</location>
    </subcellularLocation>
</comment>
<comment type="similarity">
    <text evidence="1">Belongs to the DsrE/TusD family.</text>
</comment>
<proteinExistence type="inferred from homology"/>
<evidence type="ECO:0000255" key="1">
    <source>
        <dbReference type="HAMAP-Rule" id="MF_00390"/>
    </source>
</evidence>
<organism>
    <name type="scientific">Salmonella newport (strain SL254)</name>
    <dbReference type="NCBI Taxonomy" id="423368"/>
    <lineage>
        <taxon>Bacteria</taxon>
        <taxon>Pseudomonadati</taxon>
        <taxon>Pseudomonadota</taxon>
        <taxon>Gammaproteobacteria</taxon>
        <taxon>Enterobacterales</taxon>
        <taxon>Enterobacteriaceae</taxon>
        <taxon>Salmonella</taxon>
    </lineage>
</organism>
<accession>B4SUV1</accession>
<protein>
    <recommendedName>
        <fullName evidence="1">Sulfurtransferase TusD</fullName>
        <ecNumber evidence="1">2.8.1.-</ecNumber>
    </recommendedName>
    <alternativeName>
        <fullName evidence="1">tRNA 2-thiouridine synthesizing protein D</fullName>
    </alternativeName>
</protein>
<reference key="1">
    <citation type="journal article" date="2011" name="J. Bacteriol.">
        <title>Comparative genomics of 28 Salmonella enterica isolates: evidence for CRISPR-mediated adaptive sublineage evolution.</title>
        <authorList>
            <person name="Fricke W.F."/>
            <person name="Mammel M.K."/>
            <person name="McDermott P.F."/>
            <person name="Tartera C."/>
            <person name="White D.G."/>
            <person name="Leclerc J.E."/>
            <person name="Ravel J."/>
            <person name="Cebula T.A."/>
        </authorList>
    </citation>
    <scope>NUCLEOTIDE SEQUENCE [LARGE SCALE GENOMIC DNA]</scope>
    <source>
        <strain>SL254</strain>
    </source>
</reference>
<sequence>MRYAIMVTGAAYGTQQASSALQFAHALLNEGHELASVFFYREGVYNANLLTSPASDEYDLVRAWQKLNTQHGVALNICVAAALRRGIIDETEAGRLGLPSANLQPGFTLSGLGALAEASLTCDRVVQF</sequence>
<keyword id="KW-0963">Cytoplasm</keyword>
<keyword id="KW-0808">Transferase</keyword>
<keyword id="KW-0819">tRNA processing</keyword>